<reference key="1">
    <citation type="submission" date="1996-06" db="EMBL/GenBank/DDBJ databases">
        <authorList>
            <person name="Roche P.J."/>
        </authorList>
    </citation>
    <scope>NUCLEOTIDE SEQUENCE [MRNA]</scope>
</reference>
<name>HXA4_SHEEP</name>
<accession>Q28598</accession>
<keyword id="KW-0217">Developmental protein</keyword>
<keyword id="KW-0238">DNA-binding</keyword>
<keyword id="KW-0371">Homeobox</keyword>
<keyword id="KW-0539">Nucleus</keyword>
<keyword id="KW-1185">Reference proteome</keyword>
<keyword id="KW-0804">Transcription</keyword>
<keyword id="KW-0805">Transcription regulation</keyword>
<dbReference type="EMBL" id="U61752">
    <property type="protein sequence ID" value="AAB04134.1"/>
    <property type="molecule type" value="mRNA"/>
</dbReference>
<dbReference type="SMR" id="Q28598"/>
<dbReference type="STRING" id="9940.ENSOARP00000010491"/>
<dbReference type="PaxDb" id="9940-ENSOARP00000010491"/>
<dbReference type="eggNOG" id="KOG0489">
    <property type="taxonomic scope" value="Eukaryota"/>
</dbReference>
<dbReference type="Proteomes" id="UP000002356">
    <property type="component" value="Unplaced"/>
</dbReference>
<dbReference type="GO" id="GO:0005654">
    <property type="term" value="C:nucleoplasm"/>
    <property type="evidence" value="ECO:0007669"/>
    <property type="project" value="TreeGrafter"/>
</dbReference>
<dbReference type="GO" id="GO:0000981">
    <property type="term" value="F:DNA-binding transcription factor activity, RNA polymerase II-specific"/>
    <property type="evidence" value="ECO:0007669"/>
    <property type="project" value="InterPro"/>
</dbReference>
<dbReference type="GO" id="GO:0000978">
    <property type="term" value="F:RNA polymerase II cis-regulatory region sequence-specific DNA binding"/>
    <property type="evidence" value="ECO:0007669"/>
    <property type="project" value="TreeGrafter"/>
</dbReference>
<dbReference type="GO" id="GO:0009952">
    <property type="term" value="P:anterior/posterior pattern specification"/>
    <property type="evidence" value="ECO:0007669"/>
    <property type="project" value="TreeGrafter"/>
</dbReference>
<dbReference type="GO" id="GO:0048704">
    <property type="term" value="P:embryonic skeletal system morphogenesis"/>
    <property type="evidence" value="ECO:0007669"/>
    <property type="project" value="TreeGrafter"/>
</dbReference>
<dbReference type="GO" id="GO:0045944">
    <property type="term" value="P:positive regulation of transcription by RNA polymerase II"/>
    <property type="evidence" value="ECO:0007669"/>
    <property type="project" value="TreeGrafter"/>
</dbReference>
<dbReference type="CDD" id="cd00086">
    <property type="entry name" value="homeodomain"/>
    <property type="match status" value="1"/>
</dbReference>
<dbReference type="Gene3D" id="1.10.10.60">
    <property type="entry name" value="Homeodomain-like"/>
    <property type="match status" value="1"/>
</dbReference>
<dbReference type="InterPro" id="IPR050609">
    <property type="entry name" value="Antp_homeobox_Deformed_sf"/>
</dbReference>
<dbReference type="InterPro" id="IPR001356">
    <property type="entry name" value="HD"/>
</dbReference>
<dbReference type="InterPro" id="IPR020479">
    <property type="entry name" value="HD_metazoa"/>
</dbReference>
<dbReference type="InterPro" id="IPR017970">
    <property type="entry name" value="Homeobox_CS"/>
</dbReference>
<dbReference type="InterPro" id="IPR009057">
    <property type="entry name" value="Homeodomain-like_sf"/>
</dbReference>
<dbReference type="PANTHER" id="PTHR45771:SF2">
    <property type="entry name" value="HOMEOBOX PROTEIN HOX-A4"/>
    <property type="match status" value="1"/>
</dbReference>
<dbReference type="PANTHER" id="PTHR45771">
    <property type="entry name" value="HOMEOTIC PROTEIN DEFORMED"/>
    <property type="match status" value="1"/>
</dbReference>
<dbReference type="Pfam" id="PF00046">
    <property type="entry name" value="Homeodomain"/>
    <property type="match status" value="1"/>
</dbReference>
<dbReference type="PRINTS" id="PR00024">
    <property type="entry name" value="HOMEOBOX"/>
</dbReference>
<dbReference type="SMART" id="SM00389">
    <property type="entry name" value="HOX"/>
    <property type="match status" value="1"/>
</dbReference>
<dbReference type="SUPFAM" id="SSF46689">
    <property type="entry name" value="Homeodomain-like"/>
    <property type="match status" value="1"/>
</dbReference>
<dbReference type="PROSITE" id="PS00027">
    <property type="entry name" value="HOMEOBOX_1"/>
    <property type="match status" value="1"/>
</dbReference>
<dbReference type="PROSITE" id="PS50071">
    <property type="entry name" value="HOMEOBOX_2"/>
    <property type="match status" value="1"/>
</dbReference>
<protein>
    <recommendedName>
        <fullName>Homeobox protein Hox-A4</fullName>
    </recommendedName>
</protein>
<evidence type="ECO:0000255" key="1">
    <source>
        <dbReference type="PROSITE-ProRule" id="PRU00108"/>
    </source>
</evidence>
<evidence type="ECO:0000256" key="2">
    <source>
        <dbReference type="SAM" id="MobiDB-lite"/>
    </source>
</evidence>
<evidence type="ECO:0000305" key="3"/>
<sequence>AYTRQQVLELEKEFHFNRYLTRRRRIEIAHTLCLSEAQVKIWFQNRRMKWKKDHKLPNTKMRSSNSGSASAGPPGKPQTQSPHLHPH</sequence>
<organism>
    <name type="scientific">Ovis aries</name>
    <name type="common">Sheep</name>
    <dbReference type="NCBI Taxonomy" id="9940"/>
    <lineage>
        <taxon>Eukaryota</taxon>
        <taxon>Metazoa</taxon>
        <taxon>Chordata</taxon>
        <taxon>Craniata</taxon>
        <taxon>Vertebrata</taxon>
        <taxon>Euteleostomi</taxon>
        <taxon>Mammalia</taxon>
        <taxon>Eutheria</taxon>
        <taxon>Laurasiatheria</taxon>
        <taxon>Artiodactyla</taxon>
        <taxon>Ruminantia</taxon>
        <taxon>Pecora</taxon>
        <taxon>Bovidae</taxon>
        <taxon>Caprinae</taxon>
        <taxon>Ovis</taxon>
    </lineage>
</organism>
<proteinExistence type="evidence at transcript level"/>
<comment type="function">
    <text>Sequence-specific transcription factor which is part of a developmental regulatory system that provides cells with specific positional identities on the anterior-posterior axis.</text>
</comment>
<comment type="subcellular location">
    <subcellularLocation>
        <location>Nucleus</location>
    </subcellularLocation>
</comment>
<comment type="similarity">
    <text evidence="3">Belongs to the Antp homeobox family. Deformed subfamily.</text>
</comment>
<feature type="chain" id="PRO_0000200051" description="Homeobox protein Hox-A4">
    <location>
        <begin position="1" status="less than"/>
        <end position="87" status="greater than"/>
    </location>
</feature>
<feature type="DNA-binding region" description="Homeobox" evidence="1">
    <location>
        <begin position="1" status="less than"/>
        <end position="54"/>
    </location>
</feature>
<feature type="region of interest" description="Disordered" evidence="2">
    <location>
        <begin position="52"/>
        <end position="87"/>
    </location>
</feature>
<feature type="compositionally biased region" description="Low complexity" evidence="2">
    <location>
        <begin position="63"/>
        <end position="73"/>
    </location>
</feature>
<feature type="compositionally biased region" description="Polar residues" evidence="2">
    <location>
        <begin position="77"/>
        <end position="87"/>
    </location>
</feature>
<feature type="non-terminal residue">
    <location>
        <position position="1"/>
    </location>
</feature>
<feature type="non-terminal residue">
    <location>
        <position position="87"/>
    </location>
</feature>
<gene>
    <name type="primary">HOXA4</name>
    <name type="synonym">HOXA-4</name>
</gene>